<comment type="subcellular location">
    <subcellularLocation>
        <location evidence="2">Membrane</location>
        <topology evidence="2">Multi-pass membrane protein</topology>
    </subcellularLocation>
</comment>
<organism>
    <name type="scientific">Dictyostelium discoideum</name>
    <name type="common">Social amoeba</name>
    <dbReference type="NCBI Taxonomy" id="44689"/>
    <lineage>
        <taxon>Eukaryota</taxon>
        <taxon>Amoebozoa</taxon>
        <taxon>Evosea</taxon>
        <taxon>Eumycetozoa</taxon>
        <taxon>Dictyostelia</taxon>
        <taxon>Dictyosteliales</taxon>
        <taxon>Dictyosteliaceae</taxon>
        <taxon>Dictyostelium</taxon>
    </lineage>
</organism>
<keyword id="KW-0325">Glycoprotein</keyword>
<keyword id="KW-0472">Membrane</keyword>
<keyword id="KW-1185">Reference proteome</keyword>
<keyword id="KW-0812">Transmembrane</keyword>
<keyword id="KW-1133">Transmembrane helix</keyword>
<evidence type="ECO:0000255" key="1"/>
<evidence type="ECO:0000305" key="2"/>
<reference key="1">
    <citation type="journal article" date="2002" name="Nature">
        <title>Sequence and analysis of chromosome 2 of Dictyostelium discoideum.</title>
        <authorList>
            <person name="Gloeckner G."/>
            <person name="Eichinger L."/>
            <person name="Szafranski K."/>
            <person name="Pachebat J.A."/>
            <person name="Bankier A.T."/>
            <person name="Dear P.H."/>
            <person name="Lehmann R."/>
            <person name="Baumgart C."/>
            <person name="Parra G."/>
            <person name="Abril J.F."/>
            <person name="Guigo R."/>
            <person name="Kumpf K."/>
            <person name="Tunggal B."/>
            <person name="Cox E.C."/>
            <person name="Quail M.A."/>
            <person name="Platzer M."/>
            <person name="Rosenthal A."/>
            <person name="Noegel A.A."/>
        </authorList>
    </citation>
    <scope>NUCLEOTIDE SEQUENCE [LARGE SCALE GENOMIC DNA]</scope>
    <source>
        <strain>AX4</strain>
    </source>
</reference>
<reference key="2">
    <citation type="journal article" date="2005" name="Nature">
        <title>The genome of the social amoeba Dictyostelium discoideum.</title>
        <authorList>
            <person name="Eichinger L."/>
            <person name="Pachebat J.A."/>
            <person name="Gloeckner G."/>
            <person name="Rajandream M.A."/>
            <person name="Sucgang R."/>
            <person name="Berriman M."/>
            <person name="Song J."/>
            <person name="Olsen R."/>
            <person name="Szafranski K."/>
            <person name="Xu Q."/>
            <person name="Tunggal B."/>
            <person name="Kummerfeld S."/>
            <person name="Madera M."/>
            <person name="Konfortov B.A."/>
            <person name="Rivero F."/>
            <person name="Bankier A.T."/>
            <person name="Lehmann R."/>
            <person name="Hamlin N."/>
            <person name="Davies R."/>
            <person name="Gaudet P."/>
            <person name="Fey P."/>
            <person name="Pilcher K."/>
            <person name="Chen G."/>
            <person name="Saunders D."/>
            <person name="Sodergren E.J."/>
            <person name="Davis P."/>
            <person name="Kerhornou A."/>
            <person name="Nie X."/>
            <person name="Hall N."/>
            <person name="Anjard C."/>
            <person name="Hemphill L."/>
            <person name="Bason N."/>
            <person name="Farbrother P."/>
            <person name="Desany B."/>
            <person name="Just E."/>
            <person name="Morio T."/>
            <person name="Rost R."/>
            <person name="Churcher C.M."/>
            <person name="Cooper J."/>
            <person name="Haydock S."/>
            <person name="van Driessche N."/>
            <person name="Cronin A."/>
            <person name="Goodhead I."/>
            <person name="Muzny D.M."/>
            <person name="Mourier T."/>
            <person name="Pain A."/>
            <person name="Lu M."/>
            <person name="Harper D."/>
            <person name="Lindsay R."/>
            <person name="Hauser H."/>
            <person name="James K.D."/>
            <person name="Quiles M."/>
            <person name="Madan Babu M."/>
            <person name="Saito T."/>
            <person name="Buchrieser C."/>
            <person name="Wardroper A."/>
            <person name="Felder M."/>
            <person name="Thangavelu M."/>
            <person name="Johnson D."/>
            <person name="Knights A."/>
            <person name="Loulseged H."/>
            <person name="Mungall K.L."/>
            <person name="Oliver K."/>
            <person name="Price C."/>
            <person name="Quail M.A."/>
            <person name="Urushihara H."/>
            <person name="Hernandez J."/>
            <person name="Rabbinowitsch E."/>
            <person name="Steffen D."/>
            <person name="Sanders M."/>
            <person name="Ma J."/>
            <person name="Kohara Y."/>
            <person name="Sharp S."/>
            <person name="Simmonds M.N."/>
            <person name="Spiegler S."/>
            <person name="Tivey A."/>
            <person name="Sugano S."/>
            <person name="White B."/>
            <person name="Walker D."/>
            <person name="Woodward J.R."/>
            <person name="Winckler T."/>
            <person name="Tanaka Y."/>
            <person name="Shaulsky G."/>
            <person name="Schleicher M."/>
            <person name="Weinstock G.M."/>
            <person name="Rosenthal A."/>
            <person name="Cox E.C."/>
            <person name="Chisholm R.L."/>
            <person name="Gibbs R.A."/>
            <person name="Loomis W.F."/>
            <person name="Platzer M."/>
            <person name="Kay R.R."/>
            <person name="Williams J.G."/>
            <person name="Dear P.H."/>
            <person name="Noegel A.A."/>
            <person name="Barrell B.G."/>
            <person name="Kuspa A."/>
        </authorList>
    </citation>
    <scope>NUCLEOTIDE SEQUENCE [LARGE SCALE GENOMIC DNA]</scope>
    <source>
        <strain>AX4</strain>
    </source>
</reference>
<dbReference type="EMBL" id="AAFI02000008">
    <property type="protein sequence ID" value="EAL70995.1"/>
    <property type="molecule type" value="Genomic_DNA"/>
</dbReference>
<dbReference type="RefSeq" id="XP_644865.1">
    <property type="nucleotide sequence ID" value="XM_639773.1"/>
</dbReference>
<dbReference type="GlyGen" id="Q86IJ0">
    <property type="glycosylation" value="3 sites"/>
</dbReference>
<dbReference type="PaxDb" id="44689-DDB0235378"/>
<dbReference type="EnsemblProtists" id="EAL70995">
    <property type="protein sequence ID" value="EAL70995"/>
    <property type="gene ID" value="DDB_G0272716"/>
</dbReference>
<dbReference type="GeneID" id="8618544"/>
<dbReference type="KEGG" id="ddi:DDB_G0272716"/>
<dbReference type="dictyBase" id="DDB_G0272716"/>
<dbReference type="VEuPathDB" id="AmoebaDB:DDB_G0272716"/>
<dbReference type="HOGENOM" id="CLU_790905_0_0_1"/>
<dbReference type="InParanoid" id="Q86IJ0"/>
<dbReference type="PRO" id="PR:Q86IJ0"/>
<dbReference type="Proteomes" id="UP000002195">
    <property type="component" value="Chromosome 2"/>
</dbReference>
<dbReference type="GO" id="GO:0016020">
    <property type="term" value="C:membrane"/>
    <property type="evidence" value="ECO:0007669"/>
    <property type="project" value="UniProtKB-SubCell"/>
</dbReference>
<name>Y2716_DICDI</name>
<gene>
    <name type="ORF">DDB_G0272716</name>
</gene>
<proteinExistence type="predicted"/>
<protein>
    <recommendedName>
        <fullName>Transmembrane protein DDB_G0272716</fullName>
    </recommendedName>
</protein>
<accession>Q86IJ0</accession>
<accession>Q559F1</accession>
<feature type="chain" id="PRO_0000389513" description="Transmembrane protein DDB_G0272716">
    <location>
        <begin position="1"/>
        <end position="351"/>
    </location>
</feature>
<feature type="transmembrane region" description="Helical" evidence="1">
    <location>
        <begin position="175"/>
        <end position="195"/>
    </location>
</feature>
<feature type="transmembrane region" description="Helical" evidence="1">
    <location>
        <begin position="215"/>
        <end position="235"/>
    </location>
</feature>
<feature type="glycosylation site" description="N-linked (GlcNAc...) asparagine" evidence="1">
    <location>
        <position position="4"/>
    </location>
</feature>
<feature type="glycosylation site" description="N-linked (GlcNAc...) asparagine" evidence="1">
    <location>
        <position position="59"/>
    </location>
</feature>
<feature type="glycosylation site" description="N-linked (GlcNAc...) asparagine" evidence="1">
    <location>
        <position position="345"/>
    </location>
</feature>
<sequence length="351" mass="39595">MENNNSLTIIKKADPKTKSNGEAFQIAFDSMDKIKTMLTQQNDKEKLVLKKLMIEMSINNSLLNELLTSFSTRVNIIDVEIIVLESQISTIERLTLENKKEIQSNDQEKIKEISSMIDKLIDPLLKNIDGLTNKFTEKNVNDEELKKKIDVFFENSKKLFQGIDKAEKSQFLTKFSSLFGVISGFLGIGSVTAIGATEAVGVTSLIAVGATSLSVVAPICAPVLLTFGCLVGAFISFYKQSVARDKKLKTLKSLLSYYMENIELISQVTDETTKLIYHELKEKVLEFKKLEANLKIDFDLSPIKDQFKSITSKQNLIKDKVEEIANYQLDLIQECQKLKKKSLKNKTINKK</sequence>